<name>FL3H_HORVU</name>
<organism>
    <name type="scientific">Hordeum vulgare</name>
    <name type="common">Barley</name>
    <dbReference type="NCBI Taxonomy" id="4513"/>
    <lineage>
        <taxon>Eukaryota</taxon>
        <taxon>Viridiplantae</taxon>
        <taxon>Streptophyta</taxon>
        <taxon>Embryophyta</taxon>
        <taxon>Tracheophyta</taxon>
        <taxon>Spermatophyta</taxon>
        <taxon>Magnoliopsida</taxon>
        <taxon>Liliopsida</taxon>
        <taxon>Poales</taxon>
        <taxon>Poaceae</taxon>
        <taxon>BOP clade</taxon>
        <taxon>Pooideae</taxon>
        <taxon>Triticodae</taxon>
        <taxon>Triticeae</taxon>
        <taxon>Hordeinae</taxon>
        <taxon>Hordeum</taxon>
    </lineage>
</organism>
<comment type="function">
    <text>Catalyzes the 3-beta-hydroxylation of 2S-flavanones to 2R,3R-dihydroflavonols which are intermediates in the biosynthesis of flavonols, anthocyanidins, catechins and proanthocyanidins in plants.</text>
</comment>
<comment type="catalytic activity">
    <reaction evidence="1">
        <text>a (2S)-flavan-4-one + 2-oxoglutarate + O2 = a (2R,3R)-dihydroflavonol + succinate + CO2</text>
        <dbReference type="Rhea" id="RHEA:18621"/>
        <dbReference type="ChEBI" id="CHEBI:15379"/>
        <dbReference type="ChEBI" id="CHEBI:16526"/>
        <dbReference type="ChEBI" id="CHEBI:16810"/>
        <dbReference type="ChEBI" id="CHEBI:30031"/>
        <dbReference type="ChEBI" id="CHEBI:138188"/>
        <dbReference type="ChEBI" id="CHEBI:140377"/>
        <dbReference type="EC" id="1.14.11.9"/>
    </reaction>
</comment>
<comment type="cofactor">
    <cofactor evidence="2">
        <name>Fe(2+)</name>
        <dbReference type="ChEBI" id="CHEBI:29033"/>
    </cofactor>
    <text evidence="2">Binds 1 Fe(2+) ion per subunit.</text>
</comment>
<comment type="cofactor">
    <cofactor>
        <name>L-ascorbate</name>
        <dbReference type="ChEBI" id="CHEBI:38290"/>
    </cofactor>
</comment>
<comment type="pathway">
    <text>Secondary metabolite biosynthesis; flavonoid biosynthesis.</text>
</comment>
<comment type="similarity">
    <text evidence="3">Belongs to the iron/ascorbate-dependent oxidoreductase family.</text>
</comment>
<feature type="chain" id="PRO_0000067286" description="Naringenin,2-oxoglutarate 3-dioxygenase">
    <location>
        <begin position="1"/>
        <end position="377"/>
    </location>
</feature>
<feature type="domain" description="Fe2OG dioxygenase" evidence="2">
    <location>
        <begin position="193"/>
        <end position="297"/>
    </location>
</feature>
<feature type="binding site" evidence="2">
    <location>
        <position position="220"/>
    </location>
    <ligand>
        <name>Fe cation</name>
        <dbReference type="ChEBI" id="CHEBI:24875"/>
    </ligand>
</feature>
<feature type="binding site" evidence="2">
    <location>
        <position position="222"/>
    </location>
    <ligand>
        <name>Fe cation</name>
        <dbReference type="ChEBI" id="CHEBI:24875"/>
    </ligand>
</feature>
<feature type="binding site" evidence="2">
    <location>
        <position position="278"/>
    </location>
    <ligand>
        <name>Fe cation</name>
        <dbReference type="ChEBI" id="CHEBI:24875"/>
    </ligand>
</feature>
<feature type="binding site" evidence="2">
    <location>
        <position position="288"/>
    </location>
    <ligand>
        <name>2-oxoglutarate</name>
        <dbReference type="ChEBI" id="CHEBI:16810"/>
    </ligand>
</feature>
<protein>
    <recommendedName>
        <fullName>Naringenin,2-oxoglutarate 3-dioxygenase</fullName>
        <ecNumber evidence="1">1.14.11.9</ecNumber>
    </recommendedName>
    <alternativeName>
        <fullName>FHT</fullName>
    </alternativeName>
    <alternativeName>
        <fullName>Flavanone-3-hydroxylase</fullName>
        <shortName>F3H</shortName>
    </alternativeName>
</protein>
<evidence type="ECO:0000250" key="1">
    <source>
        <dbReference type="UniProtKB" id="Q7XZQ7"/>
    </source>
</evidence>
<evidence type="ECO:0000255" key="2">
    <source>
        <dbReference type="PROSITE-ProRule" id="PRU00805"/>
    </source>
</evidence>
<evidence type="ECO:0000305" key="3"/>
<accession>P28038</accession>
<dbReference type="EC" id="1.14.11.9" evidence="1"/>
<dbReference type="EMBL" id="X58138">
    <property type="protein sequence ID" value="CAA41146.1"/>
    <property type="molecule type" value="mRNA"/>
</dbReference>
<dbReference type="PIR" id="S14647">
    <property type="entry name" value="S14647"/>
</dbReference>
<dbReference type="SMR" id="P28038"/>
<dbReference type="UniPathway" id="UPA00154"/>
<dbReference type="ExpressionAtlas" id="P28038">
    <property type="expression patterns" value="differential"/>
</dbReference>
<dbReference type="GO" id="GO:0045486">
    <property type="term" value="F:flavanone 3-dioxygenase activity"/>
    <property type="evidence" value="ECO:0007669"/>
    <property type="project" value="UniProtKB-EC"/>
</dbReference>
<dbReference type="GO" id="GO:0031418">
    <property type="term" value="F:L-ascorbic acid binding"/>
    <property type="evidence" value="ECO:0007669"/>
    <property type="project" value="UniProtKB-KW"/>
</dbReference>
<dbReference type="GO" id="GO:0046872">
    <property type="term" value="F:metal ion binding"/>
    <property type="evidence" value="ECO:0007669"/>
    <property type="project" value="UniProtKB-KW"/>
</dbReference>
<dbReference type="GO" id="GO:0009813">
    <property type="term" value="P:flavonoid biosynthetic process"/>
    <property type="evidence" value="ECO:0007669"/>
    <property type="project" value="UniProtKB-UniPathway"/>
</dbReference>
<dbReference type="FunFam" id="2.60.120.330:FF:000016">
    <property type="entry name" value="Naringenin,2-oxoglutarate 3-dioxygenase"/>
    <property type="match status" value="1"/>
</dbReference>
<dbReference type="Gene3D" id="2.60.120.330">
    <property type="entry name" value="B-lactam Antibiotic, Isopenicillin N Synthase, Chain"/>
    <property type="match status" value="1"/>
</dbReference>
<dbReference type="InterPro" id="IPR026992">
    <property type="entry name" value="DIOX_N"/>
</dbReference>
<dbReference type="InterPro" id="IPR044861">
    <property type="entry name" value="IPNS-like_FE2OG_OXY"/>
</dbReference>
<dbReference type="InterPro" id="IPR027443">
    <property type="entry name" value="IPNS-like_sf"/>
</dbReference>
<dbReference type="InterPro" id="IPR005123">
    <property type="entry name" value="Oxoglu/Fe-dep_dioxygenase_dom"/>
</dbReference>
<dbReference type="InterPro" id="IPR050295">
    <property type="entry name" value="Plant_2OG-oxidoreductases"/>
</dbReference>
<dbReference type="PANTHER" id="PTHR47991">
    <property type="entry name" value="OXOGLUTARATE/IRON-DEPENDENT DIOXYGENASE"/>
    <property type="match status" value="1"/>
</dbReference>
<dbReference type="Pfam" id="PF03171">
    <property type="entry name" value="2OG-FeII_Oxy"/>
    <property type="match status" value="1"/>
</dbReference>
<dbReference type="Pfam" id="PF14226">
    <property type="entry name" value="DIOX_N"/>
    <property type="match status" value="1"/>
</dbReference>
<dbReference type="SUPFAM" id="SSF51197">
    <property type="entry name" value="Clavaminate synthase-like"/>
    <property type="match status" value="1"/>
</dbReference>
<dbReference type="PROSITE" id="PS51471">
    <property type="entry name" value="FE2OG_OXY"/>
    <property type="match status" value="1"/>
</dbReference>
<sequence length="377" mass="42057">MAPVSNETFLPTEAWGEATLRPSFVRDEDERPKVAHDRFSDAVPLISLHGIDGARRAQIRDRVAAACEDWGIFQVIDHGVDADLIADMTRLAREFFALPAEDKLRYDMSGGKKGGFIVSSHLQGEAVQDWREIVTYFSYPVKARDYGRWPEKPAGWCAVVERYSERLMGLSCNLMGVLSEAMGLETEALAKACVDMDQKVVVNFYPRCPQPDLTLGLKRHTDPGTITLLLQDLVGGLQATRDGGKNWITVQPISGAFVVNLGDHGHFMSNGRFKNADHQAVVNGESSRLSIATFQNPAPDARVWPLAVREGEEPILEEPITFTEMYRRKMERDLDLAKRKKQAKDQLMQQQLQLQQQQAVAAAPMPTATKPLNEILA</sequence>
<keyword id="KW-0223">Dioxygenase</keyword>
<keyword id="KW-0284">Flavonoid biosynthesis</keyword>
<keyword id="KW-0408">Iron</keyword>
<keyword id="KW-0479">Metal-binding</keyword>
<keyword id="KW-0560">Oxidoreductase</keyword>
<keyword id="KW-0847">Vitamin C</keyword>
<proteinExistence type="evidence at transcript level"/>
<reference key="1">
    <citation type="journal article" date="1992" name="Theor. Appl. Genet.">
        <title>Expression of chalcone synthase, dihydroflavonol reductase and flavanone-3-hydroxylase in mutants of barley deficient in anthocyanin and proantocyanidin biosynthesis.</title>
        <authorList>
            <person name="Meldgaard M."/>
        </authorList>
        <dbReference type="AGRICOLA" id="IND92043518"/>
    </citation>
    <scope>NUCLEOTIDE SEQUENCE [MRNA]</scope>
    <source>
        <strain>cv. Triumph</strain>
        <tissue>Testa</tissue>
    </source>
</reference>